<gene>
    <name type="primary">GUCY2F</name>
    <name type="synonym">GUC2F</name>
</gene>
<keyword id="KW-0966">Cell projection</keyword>
<keyword id="KW-0141">cGMP biosynthesis</keyword>
<keyword id="KW-1015">Disulfide bond</keyword>
<keyword id="KW-0342">GTP-binding</keyword>
<keyword id="KW-0456">Lyase</keyword>
<keyword id="KW-0472">Membrane</keyword>
<keyword id="KW-0547">Nucleotide-binding</keyword>
<keyword id="KW-1185">Reference proteome</keyword>
<keyword id="KW-0716">Sensory transduction</keyword>
<keyword id="KW-0732">Signal</keyword>
<keyword id="KW-0812">Transmembrane</keyword>
<keyword id="KW-1133">Transmembrane helix</keyword>
<keyword id="KW-0844">Vision</keyword>
<accession>O02740</accession>
<sequence length="1103" mass="124262">MFLAPWPFSHLMLWFVTLGRQRGQHGLASFKLLWCLWLLVLMSLPLQVWAPPYKIGVVGPWTCDPLFSKALPEIAAQLATERINKDPALDLGHSLEYVIFNEDCQASRALSSFISHHQMASGFIGPANPGYCEAASLLGNSWDKGIFSWACVNYELDSKNSHPTFSRTLPSPIRVLLTVMKYFQWAHAGVISSDEDIWVHTAYRVASALRSRGLPVGVVLTTGQDSQSIQKALQQIRQADRIRIIIMCMHSTLIGGETQTHLLEWAHDLQMTDGTYVFVPYDTLLYSLPYKHTPYKVLRNNPKLREAYDAVLTITVESQEKTFYQAFEEAAARGEIPEKLESDQVSPLFGTIYNSIYFIAQAMNNAMKENGWASAASLVQHSRNVQFYGFNQLIRTDANGNGISEYVILDTNWKEWELHSTYTVDMETELLRFGETPIHFPGGRPPRADAQCWFADGRICQGGINPTFALMVCLALLIALLSINGFAYFIRHRINKIQLIKGPNRILLTLEDVTFINPHFGSKRGSHASVSFQITSEVQSGRSPRLSFSSGSLTPATCENSNIAIYEGDWVWLKKFPSGNFGDIKSVESSASDIFEMMKDLRHENINPLVGFFYDSGVFAIVTEFCSRRSLEDILMNQDVKLDWMFKSSLLLDLIKGMKYLHHREFAHGRLKSRNCVVDGRFVLKVTDYGFNDILETLRLSQEEPSAEELLWTAPELLRAPRGSRLRSFAGDVYSFAIIMQEVMVRGTPFCMMDLPAKEIIERIKKPPPVYRPVVPPEHAPPECLQLMKQCWAEAAEQRPTFDEIFNQFKTFNKGKKTNIIDSMLRMLEQYSSNLEDLIQERTEELEIEKQKTEKLLTQMLPPSVAESLKKGCTVEPEGFDLVTLYFSDIVGFTTISAMSEPIEVVDLLNDLYTLFDAIIGSHDVYKVETIGDAYMVASGLPKRNGMRHAAEIANMSLDILSSVGTFKMRHMPEVPVRIRIGLHSGPVVAGVVGLTMPRYCLFGDTVNTASRMESTGLPYRIHVSHSTVTILRTLGEGYEVELRGRTELKGKGTEETFWLVGKKGFTKPLPVPPPVGKDGQVGHGLQSVEIAAFQRRKQKSSW</sequence>
<comment type="function">
    <text evidence="4 8 9">Responsible for the synthesis of cyclic GMP (cGMP) in rods and cones of photoreceptors (PubMed:9175772, PubMed:9571173). Plays an essential role in phototransduction, by mediating cGMP replenishment (PubMed:9175772, PubMed:9571173). May also participate in the trafficking of membrane-asociated proteins to the photoreceptor outer segment membrane (By similarity).</text>
</comment>
<comment type="catalytic activity">
    <reaction evidence="8 9">
        <text>GTP = 3',5'-cyclic GMP + diphosphate</text>
        <dbReference type="Rhea" id="RHEA:13665"/>
        <dbReference type="ChEBI" id="CHEBI:33019"/>
        <dbReference type="ChEBI" id="CHEBI:37565"/>
        <dbReference type="ChEBI" id="CHEBI:57746"/>
        <dbReference type="EC" id="4.6.1.2"/>
    </reaction>
</comment>
<comment type="activity regulation">
    <text evidence="2 9">Activated by GUCA1B when free calcium ions concentration is low, and inhibited by GUCA1B when free calcium ions concentration is high (PubMed:9571173). Inhibited by RD3 (By similarity).</text>
</comment>
<comment type="subunit">
    <text evidence="3 4">Homodimer (By similarity). Interacts with RD3; promotes the exit of GUCY2F from the endoplasmic reticulum and its trafficking to the photoreceptor outer segments (By similarity).</text>
</comment>
<comment type="subcellular location">
    <subcellularLocation>
        <location evidence="8">Membrane</location>
        <topology evidence="5">Single-pass type I membrane protein</topology>
    </subcellularLocation>
    <subcellularLocation>
        <location evidence="4">Photoreceptor outer segment membrane</location>
        <topology evidence="5">Single-pass type I membrane protein</topology>
    </subcellularLocation>
</comment>
<comment type="tissue specificity">
    <text evidence="8">Expressed specifically in retina.</text>
</comment>
<comment type="domain">
    <text>The protein kinase domain is predicted to be catalytically inactive.</text>
</comment>
<comment type="PTM">
    <text>There are 9 conserved cysteine residues in sensory guanylate cyclases, 6 in the extracellular domain, which may be involved in intra- or interchain disulfide bonds.</text>
</comment>
<comment type="similarity">
    <text evidence="6">Belongs to the adenylyl cyclase class-4/guanylyl cyclase family.</text>
</comment>
<name>GUC2F_BOVIN</name>
<protein>
    <recommendedName>
        <fullName>Retinal guanylyl cyclase 2</fullName>
        <shortName>RETGC-2</shortName>
        <ecNumber evidence="8 9">4.6.1.2</ecNumber>
    </recommendedName>
    <alternativeName>
        <fullName>Guanylate cyclase 2F, retinal</fullName>
    </alternativeName>
    <alternativeName>
        <fullName>Guanylate cyclase F</fullName>
        <shortName>GC-F</shortName>
    </alternativeName>
    <alternativeName>
        <fullName evidence="10 11">Rod outer segment membrane guanylate cyclase 2</fullName>
        <shortName evidence="10 11">ROS-GC2</shortName>
    </alternativeName>
</protein>
<organism>
    <name type="scientific">Bos taurus</name>
    <name type="common">Bovine</name>
    <dbReference type="NCBI Taxonomy" id="9913"/>
    <lineage>
        <taxon>Eukaryota</taxon>
        <taxon>Metazoa</taxon>
        <taxon>Chordata</taxon>
        <taxon>Craniata</taxon>
        <taxon>Vertebrata</taxon>
        <taxon>Euteleostomi</taxon>
        <taxon>Mammalia</taxon>
        <taxon>Eutheria</taxon>
        <taxon>Laurasiatheria</taxon>
        <taxon>Artiodactyla</taxon>
        <taxon>Ruminantia</taxon>
        <taxon>Pecora</taxon>
        <taxon>Bovidae</taxon>
        <taxon>Bovinae</taxon>
        <taxon>Bos</taxon>
    </lineage>
</organism>
<evidence type="ECO:0000250" key="1"/>
<evidence type="ECO:0000250" key="2">
    <source>
        <dbReference type="UniProtKB" id="P51841"/>
    </source>
</evidence>
<evidence type="ECO:0000250" key="3">
    <source>
        <dbReference type="UniProtKB" id="P51842"/>
    </source>
</evidence>
<evidence type="ECO:0000250" key="4">
    <source>
        <dbReference type="UniProtKB" id="Q5SDA5"/>
    </source>
</evidence>
<evidence type="ECO:0000255" key="5"/>
<evidence type="ECO:0000255" key="6">
    <source>
        <dbReference type="PROSITE-ProRule" id="PRU00099"/>
    </source>
</evidence>
<evidence type="ECO:0000255" key="7">
    <source>
        <dbReference type="PROSITE-ProRule" id="PRU00159"/>
    </source>
</evidence>
<evidence type="ECO:0000269" key="8">
    <source>
    </source>
</evidence>
<evidence type="ECO:0000269" key="9">
    <source>
    </source>
</evidence>
<evidence type="ECO:0000303" key="10">
    <source>
    </source>
</evidence>
<evidence type="ECO:0000303" key="11">
    <source>
    </source>
</evidence>
<evidence type="ECO:0000305" key="12"/>
<dbReference type="EC" id="4.6.1.2" evidence="8 9"/>
<dbReference type="EMBL" id="U95958">
    <property type="protein sequence ID" value="AAB53864.1"/>
    <property type="molecule type" value="mRNA"/>
</dbReference>
<dbReference type="PIR" id="JC5581">
    <property type="entry name" value="JC5581"/>
</dbReference>
<dbReference type="RefSeq" id="NP_776974.1">
    <property type="nucleotide sequence ID" value="NM_174549.2"/>
</dbReference>
<dbReference type="SMR" id="O02740"/>
<dbReference type="FunCoup" id="O02740">
    <property type="interactions" value="66"/>
</dbReference>
<dbReference type="STRING" id="9913.ENSBTAP00000036727"/>
<dbReference type="PaxDb" id="9913-ENSBTAP00000036727"/>
<dbReference type="GeneID" id="282246"/>
<dbReference type="KEGG" id="bta:282246"/>
<dbReference type="CTD" id="2986"/>
<dbReference type="eggNOG" id="KOG1023">
    <property type="taxonomic scope" value="Eukaryota"/>
</dbReference>
<dbReference type="InParanoid" id="O02740"/>
<dbReference type="OrthoDB" id="1890790at2759"/>
<dbReference type="BRENDA" id="4.6.1.2">
    <property type="organism ID" value="908"/>
</dbReference>
<dbReference type="Proteomes" id="UP000009136">
    <property type="component" value="Unplaced"/>
</dbReference>
<dbReference type="GO" id="GO:0005886">
    <property type="term" value="C:plasma membrane"/>
    <property type="evidence" value="ECO:0000314"/>
    <property type="project" value="UniProtKB"/>
</dbReference>
<dbReference type="GO" id="GO:0120200">
    <property type="term" value="C:rod photoreceptor outer segment"/>
    <property type="evidence" value="ECO:0000250"/>
    <property type="project" value="UniProtKB"/>
</dbReference>
<dbReference type="GO" id="GO:0005524">
    <property type="term" value="F:ATP binding"/>
    <property type="evidence" value="ECO:0007669"/>
    <property type="project" value="InterPro"/>
</dbReference>
<dbReference type="GO" id="GO:0005525">
    <property type="term" value="F:GTP binding"/>
    <property type="evidence" value="ECO:0007669"/>
    <property type="project" value="UniProtKB-KW"/>
</dbReference>
<dbReference type="GO" id="GO:0004383">
    <property type="term" value="F:guanylate cyclase activity"/>
    <property type="evidence" value="ECO:0000314"/>
    <property type="project" value="UniProtKB"/>
</dbReference>
<dbReference type="GO" id="GO:0001653">
    <property type="term" value="F:peptide receptor activity"/>
    <property type="evidence" value="ECO:0000318"/>
    <property type="project" value="GO_Central"/>
</dbReference>
<dbReference type="GO" id="GO:0004672">
    <property type="term" value="F:protein kinase activity"/>
    <property type="evidence" value="ECO:0007669"/>
    <property type="project" value="InterPro"/>
</dbReference>
<dbReference type="GO" id="GO:0006182">
    <property type="term" value="P:cGMP biosynthetic process"/>
    <property type="evidence" value="ECO:0000318"/>
    <property type="project" value="GO_Central"/>
</dbReference>
<dbReference type="GO" id="GO:0035556">
    <property type="term" value="P:intracellular signal transduction"/>
    <property type="evidence" value="ECO:0007669"/>
    <property type="project" value="InterPro"/>
</dbReference>
<dbReference type="GO" id="GO:0007168">
    <property type="term" value="P:receptor guanylyl cyclase signaling pathway"/>
    <property type="evidence" value="ECO:0000318"/>
    <property type="project" value="GO_Central"/>
</dbReference>
<dbReference type="GO" id="GO:0007601">
    <property type="term" value="P:visual perception"/>
    <property type="evidence" value="ECO:0007669"/>
    <property type="project" value="UniProtKB-KW"/>
</dbReference>
<dbReference type="CDD" id="cd07302">
    <property type="entry name" value="CHD"/>
    <property type="match status" value="1"/>
</dbReference>
<dbReference type="CDD" id="cd06371">
    <property type="entry name" value="PBP1_sensory_GC_DEF-like"/>
    <property type="match status" value="1"/>
</dbReference>
<dbReference type="FunFam" id="1.10.510.10:FF:000404">
    <property type="entry name" value="Guanylate cyclase"/>
    <property type="match status" value="1"/>
</dbReference>
<dbReference type="FunFam" id="3.30.70.1230:FF:000013">
    <property type="entry name" value="Guanylate cyclase"/>
    <property type="match status" value="1"/>
</dbReference>
<dbReference type="FunFam" id="3.40.50.2300:FF:000114">
    <property type="entry name" value="Guanylate cyclase"/>
    <property type="match status" value="1"/>
</dbReference>
<dbReference type="Gene3D" id="3.40.50.2300">
    <property type="match status" value="2"/>
</dbReference>
<dbReference type="Gene3D" id="3.30.70.1230">
    <property type="entry name" value="Nucleotide cyclase"/>
    <property type="match status" value="1"/>
</dbReference>
<dbReference type="Gene3D" id="1.10.510.10">
    <property type="entry name" value="Transferase(Phosphotransferase) domain 1"/>
    <property type="match status" value="1"/>
</dbReference>
<dbReference type="InterPro" id="IPR001054">
    <property type="entry name" value="A/G_cyclase"/>
</dbReference>
<dbReference type="InterPro" id="IPR018297">
    <property type="entry name" value="A/G_cyclase_CS"/>
</dbReference>
<dbReference type="InterPro" id="IPR001828">
    <property type="entry name" value="ANF_lig-bd_rcpt"/>
</dbReference>
<dbReference type="InterPro" id="IPR050401">
    <property type="entry name" value="Cyclic_nucleotide_synthase"/>
</dbReference>
<dbReference type="InterPro" id="IPR011645">
    <property type="entry name" value="HNOB_dom_associated"/>
</dbReference>
<dbReference type="InterPro" id="IPR011009">
    <property type="entry name" value="Kinase-like_dom_sf"/>
</dbReference>
<dbReference type="InterPro" id="IPR029787">
    <property type="entry name" value="Nucleotide_cyclase"/>
</dbReference>
<dbReference type="InterPro" id="IPR028082">
    <property type="entry name" value="Peripla_BP_I"/>
</dbReference>
<dbReference type="InterPro" id="IPR000719">
    <property type="entry name" value="Prot_kinase_dom"/>
</dbReference>
<dbReference type="InterPro" id="IPR001245">
    <property type="entry name" value="Ser-Thr/Tyr_kinase_cat_dom"/>
</dbReference>
<dbReference type="PANTHER" id="PTHR11920">
    <property type="entry name" value="GUANYLYL CYCLASE"/>
    <property type="match status" value="1"/>
</dbReference>
<dbReference type="PANTHER" id="PTHR11920:SF349">
    <property type="entry name" value="RETINAL GUANYLYL CYCLASE 2"/>
    <property type="match status" value="1"/>
</dbReference>
<dbReference type="Pfam" id="PF01094">
    <property type="entry name" value="ANF_receptor"/>
    <property type="match status" value="1"/>
</dbReference>
<dbReference type="Pfam" id="PF00211">
    <property type="entry name" value="Guanylate_cyc"/>
    <property type="match status" value="1"/>
</dbReference>
<dbReference type="Pfam" id="PF07701">
    <property type="entry name" value="HNOBA"/>
    <property type="match status" value="1"/>
</dbReference>
<dbReference type="Pfam" id="PF07714">
    <property type="entry name" value="PK_Tyr_Ser-Thr"/>
    <property type="match status" value="1"/>
</dbReference>
<dbReference type="SMART" id="SM00044">
    <property type="entry name" value="CYCc"/>
    <property type="match status" value="1"/>
</dbReference>
<dbReference type="SUPFAM" id="SSF55073">
    <property type="entry name" value="Nucleotide cyclase"/>
    <property type="match status" value="1"/>
</dbReference>
<dbReference type="SUPFAM" id="SSF53822">
    <property type="entry name" value="Periplasmic binding protein-like I"/>
    <property type="match status" value="1"/>
</dbReference>
<dbReference type="SUPFAM" id="SSF56112">
    <property type="entry name" value="Protein kinase-like (PK-like)"/>
    <property type="match status" value="1"/>
</dbReference>
<dbReference type="PROSITE" id="PS00452">
    <property type="entry name" value="GUANYLATE_CYCLASE_1"/>
    <property type="match status" value="1"/>
</dbReference>
<dbReference type="PROSITE" id="PS50125">
    <property type="entry name" value="GUANYLATE_CYCLASE_2"/>
    <property type="match status" value="1"/>
</dbReference>
<dbReference type="PROSITE" id="PS50011">
    <property type="entry name" value="PROTEIN_KINASE_DOM"/>
    <property type="match status" value="1"/>
</dbReference>
<reference key="1">
    <citation type="journal article" date="1997" name="Biochem. Biophys. Res. Commun.">
        <title>Structural and functional characterization of a second subfamily member of the calcium-modulated bovine rod outer segment membrane guanylate cyclase, ROS-GC2.</title>
        <authorList>
            <person name="Goraczniak R."/>
            <person name="Duda T."/>
            <person name="Sharma R.K."/>
        </authorList>
    </citation>
    <scope>NUCLEOTIDE SEQUENCE [MRNA]</scope>
    <scope>TISSUE SPECIFICITY</scope>
    <scope>SUBCELLULAR LOCATION</scope>
    <scope>CATALYTIC ACTIVITY</scope>
    <scope>FUNCTION</scope>
</reference>
<reference key="2">
    <citation type="journal article" date="1998" name="Biochem. Biophys. Res. Commun.">
        <title>Calcium modulated signaling site in type 2 rod outer segment membrane guanylate cyclase (ROS-GC2).</title>
        <authorList>
            <person name="Goraczniak R.M."/>
            <person name="Duda T."/>
            <person name="Sharma R.K."/>
        </authorList>
    </citation>
    <scope>ACTIVITY REGULATION</scope>
    <scope>CATALYTIC ACTIVITY</scope>
    <scope>FUNCTION</scope>
</reference>
<proteinExistence type="evidence at protein level"/>
<feature type="signal peptide" evidence="1">
    <location>
        <begin position="1"/>
        <end position="46"/>
    </location>
</feature>
<feature type="chain" id="PRO_0000012385" description="Retinal guanylyl cyclase 2">
    <location>
        <begin position="47"/>
        <end position="1103"/>
    </location>
</feature>
<feature type="topological domain" description="Extracellular" evidence="5">
    <location>
        <begin position="47"/>
        <end position="465"/>
    </location>
</feature>
<feature type="transmembrane region" description="Helical" evidence="5">
    <location>
        <begin position="466"/>
        <end position="490"/>
    </location>
</feature>
<feature type="topological domain" description="Cytoplasmic" evidence="5">
    <location>
        <begin position="491"/>
        <end position="1103"/>
    </location>
</feature>
<feature type="domain" description="Protein kinase" evidence="7">
    <location>
        <begin position="532"/>
        <end position="812"/>
    </location>
</feature>
<feature type="domain" description="Guanylate cyclase" evidence="6">
    <location>
        <begin position="884"/>
        <end position="1014"/>
    </location>
</feature>
<feature type="disulfide bond" evidence="1">
    <location>
        <begin position="104"/>
        <end position="132"/>
    </location>
</feature>
<feature type="disulfide bond" description="Interchain" evidence="12">
    <location>
        <position position="452"/>
    </location>
</feature>
<feature type="disulfide bond" description="Interchain" evidence="12">
    <location>
        <position position="460"/>
    </location>
</feature>